<reference key="1">
    <citation type="journal article" date="1996" name="EMBO J.">
        <title>A possible involvement of TIF1 alpha and TIF1 beta in the epigenetic control of transcription by nuclear receptors.</title>
        <authorList>
            <person name="le Douarin B."/>
            <person name="Nielsen A.L."/>
            <person name="Garnier J.-M."/>
            <person name="Ichinose H."/>
            <person name="Jeanmougin F."/>
            <person name="Losson R."/>
            <person name="Chambon P."/>
        </authorList>
    </citation>
    <scope>NUCLEOTIDE SEQUENCE [MRNA]</scope>
    <scope>SUBUNIT</scope>
    <scope>INTERACTION WITH HP1BP3; TRIM24 AND TRIM28</scope>
</reference>
<reference key="2">
    <citation type="journal article" date="2001" name="Genes Chromosomes Cancer">
        <title>Contiguous arrangement of p45 NFE2, HnRNP A1, and HP1 alpha on mouse chromosome 15 and human chromosome 12: evidence for suppression of these genes due to retroviral integration within the Fli-2 locus.</title>
        <authorList>
            <person name="Li Y.-J."/>
            <person name="Pak B.J."/>
            <person name="Higgins R.R."/>
            <person name="Lu S.-J."/>
            <person name="Ben-David Y."/>
        </authorList>
    </citation>
    <scope>NUCLEOTIDE SEQUENCE [MRNA]</scope>
</reference>
<reference key="3">
    <citation type="journal article" date="2005" name="Science">
        <title>The transcriptional landscape of the mammalian genome.</title>
        <authorList>
            <person name="Carninci P."/>
            <person name="Kasukawa T."/>
            <person name="Katayama S."/>
            <person name="Gough J."/>
            <person name="Frith M.C."/>
            <person name="Maeda N."/>
            <person name="Oyama R."/>
            <person name="Ravasi T."/>
            <person name="Lenhard B."/>
            <person name="Wells C."/>
            <person name="Kodzius R."/>
            <person name="Shimokawa K."/>
            <person name="Bajic V.B."/>
            <person name="Brenner S.E."/>
            <person name="Batalov S."/>
            <person name="Forrest A.R."/>
            <person name="Zavolan M."/>
            <person name="Davis M.J."/>
            <person name="Wilming L.G."/>
            <person name="Aidinis V."/>
            <person name="Allen J.E."/>
            <person name="Ambesi-Impiombato A."/>
            <person name="Apweiler R."/>
            <person name="Aturaliya R.N."/>
            <person name="Bailey T.L."/>
            <person name="Bansal M."/>
            <person name="Baxter L."/>
            <person name="Beisel K.W."/>
            <person name="Bersano T."/>
            <person name="Bono H."/>
            <person name="Chalk A.M."/>
            <person name="Chiu K.P."/>
            <person name="Choudhary V."/>
            <person name="Christoffels A."/>
            <person name="Clutterbuck D.R."/>
            <person name="Crowe M.L."/>
            <person name="Dalla E."/>
            <person name="Dalrymple B.P."/>
            <person name="de Bono B."/>
            <person name="Della Gatta G."/>
            <person name="di Bernardo D."/>
            <person name="Down T."/>
            <person name="Engstrom P."/>
            <person name="Fagiolini M."/>
            <person name="Faulkner G."/>
            <person name="Fletcher C.F."/>
            <person name="Fukushima T."/>
            <person name="Furuno M."/>
            <person name="Futaki S."/>
            <person name="Gariboldi M."/>
            <person name="Georgii-Hemming P."/>
            <person name="Gingeras T.R."/>
            <person name="Gojobori T."/>
            <person name="Green R.E."/>
            <person name="Gustincich S."/>
            <person name="Harbers M."/>
            <person name="Hayashi Y."/>
            <person name="Hensch T.K."/>
            <person name="Hirokawa N."/>
            <person name="Hill D."/>
            <person name="Huminiecki L."/>
            <person name="Iacono M."/>
            <person name="Ikeo K."/>
            <person name="Iwama A."/>
            <person name="Ishikawa T."/>
            <person name="Jakt M."/>
            <person name="Kanapin A."/>
            <person name="Katoh M."/>
            <person name="Kawasawa Y."/>
            <person name="Kelso J."/>
            <person name="Kitamura H."/>
            <person name="Kitano H."/>
            <person name="Kollias G."/>
            <person name="Krishnan S.P."/>
            <person name="Kruger A."/>
            <person name="Kummerfeld S.K."/>
            <person name="Kurochkin I.V."/>
            <person name="Lareau L.F."/>
            <person name="Lazarevic D."/>
            <person name="Lipovich L."/>
            <person name="Liu J."/>
            <person name="Liuni S."/>
            <person name="McWilliam S."/>
            <person name="Madan Babu M."/>
            <person name="Madera M."/>
            <person name="Marchionni L."/>
            <person name="Matsuda H."/>
            <person name="Matsuzawa S."/>
            <person name="Miki H."/>
            <person name="Mignone F."/>
            <person name="Miyake S."/>
            <person name="Morris K."/>
            <person name="Mottagui-Tabar S."/>
            <person name="Mulder N."/>
            <person name="Nakano N."/>
            <person name="Nakauchi H."/>
            <person name="Ng P."/>
            <person name="Nilsson R."/>
            <person name="Nishiguchi S."/>
            <person name="Nishikawa S."/>
            <person name="Nori F."/>
            <person name="Ohara O."/>
            <person name="Okazaki Y."/>
            <person name="Orlando V."/>
            <person name="Pang K.C."/>
            <person name="Pavan W.J."/>
            <person name="Pavesi G."/>
            <person name="Pesole G."/>
            <person name="Petrovsky N."/>
            <person name="Piazza S."/>
            <person name="Reed J."/>
            <person name="Reid J.F."/>
            <person name="Ring B.Z."/>
            <person name="Ringwald M."/>
            <person name="Rost B."/>
            <person name="Ruan Y."/>
            <person name="Salzberg S.L."/>
            <person name="Sandelin A."/>
            <person name="Schneider C."/>
            <person name="Schoenbach C."/>
            <person name="Sekiguchi K."/>
            <person name="Semple C.A."/>
            <person name="Seno S."/>
            <person name="Sessa L."/>
            <person name="Sheng Y."/>
            <person name="Shibata Y."/>
            <person name="Shimada H."/>
            <person name="Shimada K."/>
            <person name="Silva D."/>
            <person name="Sinclair B."/>
            <person name="Sperling S."/>
            <person name="Stupka E."/>
            <person name="Sugiura K."/>
            <person name="Sultana R."/>
            <person name="Takenaka Y."/>
            <person name="Taki K."/>
            <person name="Tammoja K."/>
            <person name="Tan S.L."/>
            <person name="Tang S."/>
            <person name="Taylor M.S."/>
            <person name="Tegner J."/>
            <person name="Teichmann S.A."/>
            <person name="Ueda H.R."/>
            <person name="van Nimwegen E."/>
            <person name="Verardo R."/>
            <person name="Wei C.L."/>
            <person name="Yagi K."/>
            <person name="Yamanishi H."/>
            <person name="Zabarovsky E."/>
            <person name="Zhu S."/>
            <person name="Zimmer A."/>
            <person name="Hide W."/>
            <person name="Bult C."/>
            <person name="Grimmond S.M."/>
            <person name="Teasdale R.D."/>
            <person name="Liu E.T."/>
            <person name="Brusic V."/>
            <person name="Quackenbush J."/>
            <person name="Wahlestedt C."/>
            <person name="Mattick J.S."/>
            <person name="Hume D.A."/>
            <person name="Kai C."/>
            <person name="Sasaki D."/>
            <person name="Tomaru Y."/>
            <person name="Fukuda S."/>
            <person name="Kanamori-Katayama M."/>
            <person name="Suzuki M."/>
            <person name="Aoki J."/>
            <person name="Arakawa T."/>
            <person name="Iida J."/>
            <person name="Imamura K."/>
            <person name="Itoh M."/>
            <person name="Kato T."/>
            <person name="Kawaji H."/>
            <person name="Kawagashira N."/>
            <person name="Kawashima T."/>
            <person name="Kojima M."/>
            <person name="Kondo S."/>
            <person name="Konno H."/>
            <person name="Nakano K."/>
            <person name="Ninomiya N."/>
            <person name="Nishio T."/>
            <person name="Okada M."/>
            <person name="Plessy C."/>
            <person name="Shibata K."/>
            <person name="Shiraki T."/>
            <person name="Suzuki S."/>
            <person name="Tagami M."/>
            <person name="Waki K."/>
            <person name="Watahiki A."/>
            <person name="Okamura-Oho Y."/>
            <person name="Suzuki H."/>
            <person name="Kawai J."/>
            <person name="Hayashizaki Y."/>
        </authorList>
    </citation>
    <scope>NUCLEOTIDE SEQUENCE [LARGE SCALE MRNA]</scope>
    <source>
        <strain>C57BL/6J</strain>
        <tissue>Embryo</tissue>
        <tissue>Ovary</tissue>
        <tissue>Pituitary</tissue>
    </source>
</reference>
<reference key="4">
    <citation type="journal article" date="2004" name="Genome Res.">
        <title>The status, quality, and expansion of the NIH full-length cDNA project: the Mammalian Gene Collection (MGC).</title>
        <authorList>
            <consortium name="The MGC Project Team"/>
        </authorList>
    </citation>
    <scope>NUCLEOTIDE SEQUENCE [LARGE SCALE MRNA]</scope>
</reference>
<reference key="5">
    <citation type="journal article" date="1999" name="EMBO J.">
        <title>Interaction with members of the heterochromatin protein 1 (HP1) family and histone deacetylation are differentially involved in transcriptional silencing by members of the TIF1 family.</title>
        <authorList>
            <person name="Nielsen A.L."/>
            <person name="Ortiz J.A."/>
            <person name="You J."/>
            <person name="Oulad-Abdelghani M."/>
            <person name="Khechumian R."/>
            <person name="Gansmuller A."/>
            <person name="Chambon P."/>
            <person name="Losson R."/>
        </authorList>
    </citation>
    <scope>INTERACTION WITH TRIM28</scope>
</reference>
<reference key="6">
    <citation type="journal article" date="2004" name="Genes Dev.">
        <title>A silencing pathway to induce H3-K9 and H4-K20 trimethylation at constitutive heterochromatin.</title>
        <authorList>
            <person name="Schotta G."/>
            <person name="Lachner M."/>
            <person name="Sarma K."/>
            <person name="Ebert A."/>
            <person name="Sengupta R."/>
            <person name="Reuter G."/>
            <person name="Reinberg D."/>
            <person name="Jenuwein T."/>
        </authorList>
    </citation>
    <scope>INTERACTION WITH KMT5B AND KMT5C</scope>
</reference>
<reference key="7">
    <citation type="journal article" date="2006" name="Mol. Cell. Proteomics">
        <title>Comprehensive identification of phosphorylation sites in postsynaptic density preparations.</title>
        <authorList>
            <person name="Trinidad J.C."/>
            <person name="Specht C.G."/>
            <person name="Thalhammer A."/>
            <person name="Schoepfer R."/>
            <person name="Burlingame A.L."/>
        </authorList>
    </citation>
    <scope>IDENTIFICATION BY MASS SPECTROMETRY [LARGE SCALE ANALYSIS]</scope>
    <source>
        <tissue>Brain</tissue>
    </source>
</reference>
<reference key="8">
    <citation type="journal article" date="2009" name="Immunity">
        <title>The phagosomal proteome in interferon-gamma-activated macrophages.</title>
        <authorList>
            <person name="Trost M."/>
            <person name="English L."/>
            <person name="Lemieux S."/>
            <person name="Courcelles M."/>
            <person name="Desjardins M."/>
            <person name="Thibault P."/>
        </authorList>
    </citation>
    <scope>IDENTIFICATION BY MASS SPECTROMETRY [LARGE SCALE ANALYSIS]</scope>
</reference>
<reference key="9">
    <citation type="journal article" date="2010" name="Cell">
        <title>A tissue-specific atlas of mouse protein phosphorylation and expression.</title>
        <authorList>
            <person name="Huttlin E.L."/>
            <person name="Jedrychowski M.P."/>
            <person name="Elias J.E."/>
            <person name="Goswami T."/>
            <person name="Rad R."/>
            <person name="Beausoleil S.A."/>
            <person name="Villen J."/>
            <person name="Haas W."/>
            <person name="Sowa M.E."/>
            <person name="Gygi S.P."/>
        </authorList>
    </citation>
    <scope>PHOSPHORYLATION [LARGE SCALE ANALYSIS] AT SER-14; SER-92 AND SER-93</scope>
    <scope>IDENTIFICATION BY MASS SPECTROMETRY [LARGE SCALE ANALYSIS]</scope>
    <source>
        <tissue>Brain</tissue>
        <tissue>Brown adipose tissue</tissue>
        <tissue>Heart</tissue>
        <tissue>Kidney</tissue>
        <tissue>Liver</tissue>
        <tissue>Lung</tissue>
        <tissue>Pancreas</tissue>
        <tissue>Spleen</tissue>
        <tissue>Testis</tissue>
    </source>
</reference>
<reference key="10">
    <citation type="journal article" date="2017" name="Epigenetics Chromatin">
        <title>SMYD5 regulates H4K20me3-marked heterochromatin to safeguard ES cell self-renewal and prevent spurious differentiation.</title>
        <authorList>
            <person name="Kidder B.L."/>
            <person name="Hu G."/>
            <person name="Cui K."/>
            <person name="Zhao K."/>
        </authorList>
    </citation>
    <scope>INTERACTION WITH SMYD5</scope>
</reference>
<comment type="function">
    <text evidence="1">Component of heterochromatin that recognizes and binds histone H3 tails methylated at 'Lys-9' (H3K9me), leading to epigenetic repression. In contrast, it is excluded from chromatin when 'Tyr-41' of histone H3 is phosphorylated (H3Y41ph) (By similarity). May contribute to the association of heterochromatin with the inner nuclear membrane by interactions with the lamin-B receptor (LBR) (By similarity). Involved in the formation of kinetochore through interaction with the MIS12 complex subunit NSL1 (By similarity). Required for the formation of the inner centromere (By similarity).</text>
</comment>
<comment type="function">
    <text evidence="1">Component of heterochromatin that recognizes and binds histone H3 tails methylated at 'Lys-9' (H3K9me), leading to epigenetic repression. In contrast, it is excluded from chromatin when 'Tyr-41' of histone H3 is phosphorylated (H3Y41ph). Can interact with lamin-B receptor (LBR). This interaction can contribute to the association of the heterochromatin with the inner nuclear membrane. Involved in the formation of functional kinetochore through interaction with MIS12 complex proteins (By similarity).</text>
</comment>
<comment type="subunit">
    <text evidence="1 5 6 7">Homodimer (PubMed:8978696). Interacts with histone H3 methylated at 'Lys-9'. Interacts (via Chromo 2; shadow subtype domain) with the MIS12 complex subunit NSL1; the interaction is direct, involves dimeric CBX5, and occurs during interphase. Interacts with POGZ; POGZ and PXVXL motif-containing proteins such as INCENP and TRIM28 compete for interaction with CBX5. Interacts with LRIF1 (via PxVxL motif). Interacts with INCENP. Interacts with TRIM24 (PubMed:8978696). Interacts (via the chromoshadow domain) with ATRX; the interaction is direct (By similarity). Interacts (via the chromoshadow domain) with CHAF1A; the interaction is direct (By similarity). Interacts (via the chromoshadow domain) with LBR; the interaction is direct (By similarity). Interacts (via the chromoshadow domain) with NIPBL; the interaction is direct (By similarity). Interacts (via the chromoshadow domain) with SP100; the interaction is direct (By similarity). Interacts (via the chromoshadow domain) with STAM2; the interaction is direct (By similarity). Interacts (via the chromoshadow domain) with TRIM28; the interaction is direct (PubMed:8978696). Interacts (via the chromoshadow domain) with CBX3; the interaction is direct (By similarity). Interacts with PRR14 (via N-terminus). Interacts with RRP1B (By similarity). Interacts with HNRNPU (via C-terminus); this interaction is, at least in part, RNA-dependent (By similarity). Interacts with ZNF263; recruited to the SIX3 promoter along with other proteins involved in chromatin modification and transcriptional corepression where it contributes to transcriptional repression (By similarity). Interacts with AURKB during mitosis (By similarity). Interacts with CHAMP1 (By similarity). Interacts with BAHD1 (By similarity). Interacts with HP1BP3 (PubMed:8978696). Interacts with CHD3 (By similarity). Interacts with CHD4 (By similarity). Interacts with SMYD5 (PubMed:28250819). Interacts with KMT5B (PubMed:15145825). Interacts with KMT5C (PubMed:15145825).</text>
</comment>
<comment type="interaction">
    <interactant intactId="EBI-307973">
        <id>Q61686</id>
    </interactant>
    <interactant intactId="EBI-15972382">
        <id>Q8BUH8</id>
        <label>Senp7</label>
    </interactant>
    <organismsDiffer>false</organismsDiffer>
    <experiments>4</experiments>
</comment>
<comment type="interaction">
    <interactant intactId="EBI-307973">
        <id>Q61686</id>
    </interactant>
    <interactant intactId="EBI-307947">
        <id>Q64127</id>
        <label>Trim24</label>
    </interactant>
    <organismsDiffer>false</organismsDiffer>
    <experiments>4</experiments>
</comment>
<comment type="subcellular location">
    <subcellularLocation>
        <location evidence="1">Nucleus</location>
    </subcellularLocation>
    <subcellularLocation>
        <location evidence="1">Chromosome</location>
    </subcellularLocation>
    <subcellularLocation>
        <location evidence="1">Chromosome</location>
        <location evidence="1">Centromere</location>
    </subcellularLocation>
    <text evidence="1">Colocalizes with HNRNPU in the nucleus (By similarity). Component of centromeric and pericentromeric heterochromatin. Associates with chromosomes during mitosis. Associates specifically with chromatin during metaphase and anaphase. Localizes to sites of DNA damage.</text>
</comment>
<comment type="PTM">
    <text evidence="1">Phosphorylation of HP1 and LBR may be responsible for some of the alterations in chromatin organization and nuclear structure which occur at various times during the cell cycle. Phosphorylated during interphase and possibly hyper-phosphorylated during mitosis.</text>
</comment>
<comment type="PTM">
    <text evidence="1">Ubiquitinated.</text>
</comment>
<keyword id="KW-0002">3D-structure</keyword>
<keyword id="KW-0007">Acetylation</keyword>
<keyword id="KW-0137">Centromere</keyword>
<keyword id="KW-0158">Chromosome</keyword>
<keyword id="KW-1017">Isopeptide bond</keyword>
<keyword id="KW-0539">Nucleus</keyword>
<keyword id="KW-0597">Phosphoprotein</keyword>
<keyword id="KW-1185">Reference proteome</keyword>
<keyword id="KW-0677">Repeat</keyword>
<keyword id="KW-0832">Ubl conjugation</keyword>
<name>CBX5_MOUSE</name>
<feature type="chain" id="PRO_0000080209" description="Chromobox protein homolog 5">
    <location>
        <begin position="1"/>
        <end position="191"/>
    </location>
</feature>
<feature type="domain" description="Chromo 1" evidence="3">
    <location>
        <begin position="20"/>
        <end position="78"/>
    </location>
</feature>
<feature type="domain" description="Chromo 2; shadow subtype" evidence="3">
    <location>
        <begin position="121"/>
        <end position="179"/>
    </location>
</feature>
<feature type="region of interest" description="Disordered" evidence="4">
    <location>
        <begin position="1"/>
        <end position="21"/>
    </location>
</feature>
<feature type="region of interest" description="Disordered" evidence="4">
    <location>
        <begin position="70"/>
        <end position="117"/>
    </location>
</feature>
<feature type="compositionally biased region" description="Basic and acidic residues" evidence="4">
    <location>
        <begin position="73"/>
        <end position="89"/>
    </location>
</feature>
<feature type="modified residue" description="Phosphoserine" evidence="1">
    <location>
        <position position="11"/>
    </location>
</feature>
<feature type="modified residue" description="Phosphoserine" evidence="1">
    <location>
        <position position="12"/>
    </location>
</feature>
<feature type="modified residue" description="Phosphoserine" evidence="1">
    <location>
        <position position="13"/>
    </location>
</feature>
<feature type="modified residue" description="Phosphoserine" evidence="9">
    <location>
        <position position="14"/>
    </location>
</feature>
<feature type="modified residue" description="N6-acetyllysine" evidence="2">
    <location>
        <position position="40"/>
    </location>
</feature>
<feature type="modified residue" description="Phosphoserine" evidence="9">
    <location>
        <position position="92"/>
    </location>
</feature>
<feature type="modified residue" description="Phosphoserine" evidence="9">
    <location>
        <position position="93"/>
    </location>
</feature>
<feature type="modified residue" description="Phosphoserine" evidence="1">
    <location>
        <position position="95"/>
    </location>
</feature>
<feature type="modified residue" description="Phosphoserine" evidence="1">
    <location>
        <position position="97"/>
    </location>
</feature>
<feature type="cross-link" description="Glycyl lysine isopeptide (Lys-Gly) (interchain with G-Cter in SUMO2)" evidence="1">
    <location>
        <position position="32"/>
    </location>
</feature>
<feature type="cross-link" description="Glycyl lysine isopeptide (Lys-Gly) (interchain with G-Cter in SUMO2)" evidence="1">
    <location>
        <position position="91"/>
    </location>
</feature>
<feature type="cross-link" description="Glycyl lysine isopeptide (Lys-Gly) (interchain with G-Cter in SUMO2)" evidence="1">
    <location>
        <position position="102"/>
    </location>
</feature>
<feature type="cross-link" description="Glycyl lysine isopeptide (Lys-Gly) (interchain with G-Cter in SUMO2)" evidence="1">
    <location>
        <position position="106"/>
    </location>
</feature>
<feature type="cross-link" description="Glycyl lysine isopeptide (Lys-Gly) (interchain with G-Cter in SUMO2)" evidence="1">
    <location>
        <position position="154"/>
    </location>
</feature>
<feature type="cross-link" description="Glycyl lysine isopeptide (Lys-Gly) (interchain with G-Cter in SUMO2)" evidence="1">
    <location>
        <position position="184"/>
    </location>
</feature>
<feature type="sequence conflict" description="In Ref. 3; BAB31173." evidence="8" ref="3">
    <original>K</original>
    <variation>R</variation>
    <location>
        <position position="68"/>
    </location>
</feature>
<feature type="sequence conflict" description="In Ref. 3; BAB31596." evidence="8" ref="3">
    <original>I</original>
    <variation>M</variation>
    <location>
        <position position="165"/>
    </location>
</feature>
<feature type="strand" evidence="10">
    <location>
        <begin position="12"/>
        <end position="14"/>
    </location>
</feature>
<feature type="strand" evidence="10">
    <location>
        <begin position="22"/>
        <end position="31"/>
    </location>
</feature>
<feature type="strand" evidence="10">
    <location>
        <begin position="34"/>
        <end position="41"/>
    </location>
</feature>
<feature type="helix" evidence="10">
    <location>
        <begin position="46"/>
        <end position="48"/>
    </location>
</feature>
<feature type="strand" evidence="10">
    <location>
        <begin position="51"/>
        <end position="53"/>
    </location>
</feature>
<feature type="turn" evidence="10">
    <location>
        <begin position="54"/>
        <end position="56"/>
    </location>
</feature>
<feature type="helix" evidence="10">
    <location>
        <begin position="60"/>
        <end position="73"/>
    </location>
</feature>
<protein>
    <recommendedName>
        <fullName>Chromobox protein homolog 5</fullName>
    </recommendedName>
    <alternativeName>
        <fullName>Heterochromatin protein 1 homolog alpha</fullName>
        <shortName>HP1 alpha</shortName>
    </alternativeName>
</protein>
<gene>
    <name type="primary">Cbx5</name>
    <name type="synonym">Hp1a</name>
</gene>
<accession>Q61686</accession>
<accession>Q9CS35</accession>
<accession>Q9CXD1</accession>
<sequence length="191" mass="22186">MGKKTKRTADSSSSEDEEEYVVEKVLDRRMVKGQVEYLLKWKGFSEEHNTWEPEKNLDCPELISEFMKKYKKMKEGENNKPREKSEGNKRKSSFSNSADDIKSKKKREQSNDIARGFERGLEPEKIIGATDSCGDLMFLMKWKDTDEADLVLAKEANVKCPQIVIAFYEERLTWHAYPEDAENKEKESAKS</sequence>
<organism>
    <name type="scientific">Mus musculus</name>
    <name type="common">Mouse</name>
    <dbReference type="NCBI Taxonomy" id="10090"/>
    <lineage>
        <taxon>Eukaryota</taxon>
        <taxon>Metazoa</taxon>
        <taxon>Chordata</taxon>
        <taxon>Craniata</taxon>
        <taxon>Vertebrata</taxon>
        <taxon>Euteleostomi</taxon>
        <taxon>Mammalia</taxon>
        <taxon>Eutheria</taxon>
        <taxon>Euarchontoglires</taxon>
        <taxon>Glires</taxon>
        <taxon>Rodentia</taxon>
        <taxon>Myomorpha</taxon>
        <taxon>Muroidea</taxon>
        <taxon>Muridae</taxon>
        <taxon>Murinae</taxon>
        <taxon>Mus</taxon>
        <taxon>Mus</taxon>
    </lineage>
</organism>
<evidence type="ECO:0000250" key="1">
    <source>
        <dbReference type="UniProtKB" id="P45973"/>
    </source>
</evidence>
<evidence type="ECO:0000250" key="2">
    <source>
        <dbReference type="UniProtKB" id="Q13185"/>
    </source>
</evidence>
<evidence type="ECO:0000255" key="3">
    <source>
        <dbReference type="PROSITE-ProRule" id="PRU00053"/>
    </source>
</evidence>
<evidence type="ECO:0000256" key="4">
    <source>
        <dbReference type="SAM" id="MobiDB-lite"/>
    </source>
</evidence>
<evidence type="ECO:0000269" key="5">
    <source>
    </source>
</evidence>
<evidence type="ECO:0000269" key="6">
    <source>
    </source>
</evidence>
<evidence type="ECO:0000269" key="7">
    <source>
    </source>
</evidence>
<evidence type="ECO:0000305" key="8"/>
<evidence type="ECO:0007744" key="9">
    <source>
    </source>
</evidence>
<evidence type="ECO:0007829" key="10">
    <source>
        <dbReference type="PDB" id="2RVL"/>
    </source>
</evidence>
<proteinExistence type="evidence at protein level"/>
<dbReference type="EMBL" id="X99641">
    <property type="protein sequence ID" value="CAA67960.1"/>
    <property type="molecule type" value="mRNA"/>
</dbReference>
<dbReference type="EMBL" id="AF216290">
    <property type="protein sequence ID" value="AAF80993.1"/>
    <property type="molecule type" value="mRNA"/>
</dbReference>
<dbReference type="EMBL" id="AK008792">
    <property type="protein sequence ID" value="BAB25897.1"/>
    <property type="molecule type" value="mRNA"/>
</dbReference>
<dbReference type="EMBL" id="AK018349">
    <property type="protein sequence ID" value="BAB31173.1"/>
    <property type="molecule type" value="mRNA"/>
</dbReference>
<dbReference type="EMBL" id="AK030366">
    <property type="protein sequence ID" value="BAC26923.1"/>
    <property type="molecule type" value="mRNA"/>
</dbReference>
<dbReference type="EMBL" id="AK030442">
    <property type="protein sequence ID" value="BAC26966.1"/>
    <property type="molecule type" value="mRNA"/>
</dbReference>
<dbReference type="EMBL" id="AK032975">
    <property type="protein sequence ID" value="BAC28107.1"/>
    <property type="molecule type" value="mRNA"/>
</dbReference>
<dbReference type="EMBL" id="AK019198">
    <property type="protein sequence ID" value="BAB31596.1"/>
    <property type="molecule type" value="mRNA"/>
</dbReference>
<dbReference type="EMBL" id="BC004707">
    <property type="protein sequence ID" value="AAH04707.1"/>
    <property type="molecule type" value="mRNA"/>
</dbReference>
<dbReference type="CCDS" id="CCDS37231.1"/>
<dbReference type="RefSeq" id="NP_001070257.1">
    <property type="nucleotide sequence ID" value="NM_001076789.2"/>
</dbReference>
<dbReference type="RefSeq" id="NP_001103686.1">
    <property type="nucleotide sequence ID" value="NM_001110216.1"/>
</dbReference>
<dbReference type="RefSeq" id="NP_001345879.1">
    <property type="nucleotide sequence ID" value="NM_001358950.1"/>
</dbReference>
<dbReference type="RefSeq" id="NP_031652.1">
    <property type="nucleotide sequence ID" value="NM_007626.3"/>
</dbReference>
<dbReference type="RefSeq" id="XP_006520435.1">
    <property type="nucleotide sequence ID" value="XM_006520372.5"/>
</dbReference>
<dbReference type="RefSeq" id="XP_006520437.1">
    <property type="nucleotide sequence ID" value="XM_006520374.4"/>
</dbReference>
<dbReference type="RefSeq" id="XP_006520438.1">
    <property type="nucleotide sequence ID" value="XM_006520375.5"/>
</dbReference>
<dbReference type="RefSeq" id="XP_006520439.1">
    <property type="nucleotide sequence ID" value="XM_006520376.4"/>
</dbReference>
<dbReference type="RefSeq" id="XP_030104168.1">
    <property type="nucleotide sequence ID" value="XM_030248308.2"/>
</dbReference>
<dbReference type="PDB" id="2RVL">
    <property type="method" value="NMR"/>
    <property type="chains" value="A=1-80"/>
</dbReference>
<dbReference type="PDB" id="2RVM">
    <property type="method" value="NMR"/>
    <property type="chains" value="A=1-80"/>
</dbReference>
<dbReference type="PDB" id="2RVN">
    <property type="method" value="NMR"/>
    <property type="chains" value="A=1-80"/>
</dbReference>
<dbReference type="PDBsum" id="2RVL"/>
<dbReference type="PDBsum" id="2RVM"/>
<dbReference type="PDBsum" id="2RVN"/>
<dbReference type="BMRB" id="Q61686"/>
<dbReference type="SMR" id="Q61686"/>
<dbReference type="BioGRID" id="198538">
    <property type="interactions" value="75"/>
</dbReference>
<dbReference type="DIP" id="DIP-28137N"/>
<dbReference type="FunCoup" id="Q61686">
    <property type="interactions" value="2732"/>
</dbReference>
<dbReference type="IntAct" id="Q61686">
    <property type="interactions" value="13"/>
</dbReference>
<dbReference type="MINT" id="Q61686"/>
<dbReference type="STRING" id="10090.ENSMUSP00000113157"/>
<dbReference type="GlyGen" id="Q61686">
    <property type="glycosylation" value="1 site, 1 O-linked glycan (1 site)"/>
</dbReference>
<dbReference type="iPTMnet" id="Q61686"/>
<dbReference type="PhosphoSitePlus" id="Q61686"/>
<dbReference type="jPOST" id="Q61686"/>
<dbReference type="PaxDb" id="10090-ENSMUSP00000113157"/>
<dbReference type="PeptideAtlas" id="Q61686"/>
<dbReference type="ProteomicsDB" id="265572"/>
<dbReference type="Pumba" id="Q61686"/>
<dbReference type="Antibodypedia" id="4311">
    <property type="antibodies" value="934 antibodies from 44 providers"/>
</dbReference>
<dbReference type="DNASU" id="12419"/>
<dbReference type="Ensembl" id="ENSMUST00000108813.10">
    <property type="protein sequence ID" value="ENSMUSP00000104441.4"/>
    <property type="gene ID" value="ENSMUSG00000009575.15"/>
</dbReference>
<dbReference type="Ensembl" id="ENSMUST00000118152.8">
    <property type="protein sequence ID" value="ENSMUSP00000113157.2"/>
    <property type="gene ID" value="ENSMUSG00000009575.15"/>
</dbReference>
<dbReference type="Ensembl" id="ENSMUST00000122182.2">
    <property type="protein sequence ID" value="ENSMUSP00000113158.2"/>
    <property type="gene ID" value="ENSMUSG00000009575.15"/>
</dbReference>
<dbReference type="GeneID" id="12419"/>
<dbReference type="KEGG" id="mmu:12419"/>
<dbReference type="UCSC" id="uc007xxl.1">
    <property type="organism name" value="mouse"/>
</dbReference>
<dbReference type="AGR" id="MGI:109372"/>
<dbReference type="CTD" id="23468"/>
<dbReference type="MGI" id="MGI:109372">
    <property type="gene designation" value="Cbx5"/>
</dbReference>
<dbReference type="VEuPathDB" id="HostDB:ENSMUSG00000009575"/>
<dbReference type="eggNOG" id="KOG1911">
    <property type="taxonomic scope" value="Eukaryota"/>
</dbReference>
<dbReference type="GeneTree" id="ENSGT00940000158801"/>
<dbReference type="HOGENOM" id="CLU_045874_1_0_1"/>
<dbReference type="InParanoid" id="Q61686"/>
<dbReference type="OMA" id="TSCAMGK"/>
<dbReference type="OrthoDB" id="433924at2759"/>
<dbReference type="PhylomeDB" id="Q61686"/>
<dbReference type="TreeFam" id="TF350503"/>
<dbReference type="Reactome" id="R-MMU-983231">
    <property type="pathway name" value="Factors involved in megakaryocyte development and platelet production"/>
</dbReference>
<dbReference type="BioGRID-ORCS" id="12419">
    <property type="hits" value="4 hits in 80 CRISPR screens"/>
</dbReference>
<dbReference type="CD-CODE" id="01CA17F3">
    <property type="entry name" value="Centrosome"/>
</dbReference>
<dbReference type="CD-CODE" id="0C73AF1D">
    <property type="entry name" value="Synthetic Condensate 000242"/>
</dbReference>
<dbReference type="CD-CODE" id="2E092FC3">
    <property type="entry name" value="PML body"/>
</dbReference>
<dbReference type="CD-CODE" id="443AEDFE">
    <property type="entry name" value="Heterochromatin"/>
</dbReference>
<dbReference type="ChiTaRS" id="Cbx5">
    <property type="organism name" value="mouse"/>
</dbReference>
<dbReference type="EvolutionaryTrace" id="Q61686"/>
<dbReference type="PRO" id="PR:Q61686"/>
<dbReference type="Proteomes" id="UP000000589">
    <property type="component" value="Chromosome 15"/>
</dbReference>
<dbReference type="RNAct" id="Q61686">
    <property type="molecule type" value="protein"/>
</dbReference>
<dbReference type="Bgee" id="ENSMUSG00000009575">
    <property type="expression patterns" value="Expressed in floor plate of midbrain and 284 other cell types or tissues"/>
</dbReference>
<dbReference type="ExpressionAtlas" id="Q61686">
    <property type="expression patterns" value="baseline and differential"/>
</dbReference>
<dbReference type="GO" id="GO:0010369">
    <property type="term" value="C:chromocenter"/>
    <property type="evidence" value="ECO:0000314"/>
    <property type="project" value="MGI"/>
</dbReference>
<dbReference type="GO" id="GO:0000781">
    <property type="term" value="C:chromosome, telomeric region"/>
    <property type="evidence" value="ECO:0000314"/>
    <property type="project" value="BHF-UCL"/>
</dbReference>
<dbReference type="GO" id="GO:0000792">
    <property type="term" value="C:heterochromatin"/>
    <property type="evidence" value="ECO:0000314"/>
    <property type="project" value="MGI"/>
</dbReference>
<dbReference type="GO" id="GO:0000118">
    <property type="term" value="C:histone deacetylase complex"/>
    <property type="evidence" value="ECO:0000314"/>
    <property type="project" value="BHF-UCL"/>
</dbReference>
<dbReference type="GO" id="GO:0035097">
    <property type="term" value="C:histone methyltransferase complex"/>
    <property type="evidence" value="ECO:0000314"/>
    <property type="project" value="BHF-UCL"/>
</dbReference>
<dbReference type="GO" id="GO:0000776">
    <property type="term" value="C:kinetochore"/>
    <property type="evidence" value="ECO:0000314"/>
    <property type="project" value="MGI"/>
</dbReference>
<dbReference type="GO" id="GO:0005730">
    <property type="term" value="C:nucleolus"/>
    <property type="evidence" value="ECO:0000314"/>
    <property type="project" value="MGI"/>
</dbReference>
<dbReference type="GO" id="GO:0005654">
    <property type="term" value="C:nucleoplasm"/>
    <property type="evidence" value="ECO:0000304"/>
    <property type="project" value="Reactome"/>
</dbReference>
<dbReference type="GO" id="GO:0005634">
    <property type="term" value="C:nucleus"/>
    <property type="evidence" value="ECO:0000314"/>
    <property type="project" value="MGI"/>
</dbReference>
<dbReference type="GO" id="GO:0005721">
    <property type="term" value="C:pericentric heterochromatin"/>
    <property type="evidence" value="ECO:0000314"/>
    <property type="project" value="BHF-UCL"/>
</dbReference>
<dbReference type="GO" id="GO:0016605">
    <property type="term" value="C:PML body"/>
    <property type="evidence" value="ECO:0007669"/>
    <property type="project" value="Ensembl"/>
</dbReference>
<dbReference type="GO" id="GO:1990904">
    <property type="term" value="C:ribonucleoprotein complex"/>
    <property type="evidence" value="ECO:0000250"/>
    <property type="project" value="UniProtKB"/>
</dbReference>
<dbReference type="GO" id="GO:0090734">
    <property type="term" value="C:site of DNA damage"/>
    <property type="evidence" value="ECO:0000250"/>
    <property type="project" value="UniProtKB"/>
</dbReference>
<dbReference type="GO" id="GO:0017053">
    <property type="term" value="C:transcription repressor complex"/>
    <property type="evidence" value="ECO:0000314"/>
    <property type="project" value="BHF-UCL"/>
</dbReference>
<dbReference type="GO" id="GO:0003682">
    <property type="term" value="F:chromatin binding"/>
    <property type="evidence" value="ECO:0000314"/>
    <property type="project" value="MGI"/>
</dbReference>
<dbReference type="GO" id="GO:0140297">
    <property type="term" value="F:DNA-binding transcription factor binding"/>
    <property type="evidence" value="ECO:0000353"/>
    <property type="project" value="BHF-UCL"/>
</dbReference>
<dbReference type="GO" id="GO:0042826">
    <property type="term" value="F:histone deacetylase binding"/>
    <property type="evidence" value="ECO:0000353"/>
    <property type="project" value="BHF-UCL"/>
</dbReference>
<dbReference type="GO" id="GO:0062072">
    <property type="term" value="F:histone H3K9me2/3 reader activity"/>
    <property type="evidence" value="ECO:0000314"/>
    <property type="project" value="GO_Central"/>
</dbReference>
<dbReference type="GO" id="GO:0140566">
    <property type="term" value="F:histone reader activity"/>
    <property type="evidence" value="ECO:0000314"/>
    <property type="project" value="GO_Central"/>
</dbReference>
<dbReference type="GO" id="GO:0042802">
    <property type="term" value="F:identical protein binding"/>
    <property type="evidence" value="ECO:0000353"/>
    <property type="project" value="MGI"/>
</dbReference>
<dbReference type="GO" id="GO:0035064">
    <property type="term" value="F:methylated histone binding"/>
    <property type="evidence" value="ECO:0000353"/>
    <property type="project" value="MGI"/>
</dbReference>
<dbReference type="GO" id="GO:0044877">
    <property type="term" value="F:protein-containing complex binding"/>
    <property type="evidence" value="ECO:0000250"/>
    <property type="project" value="UniProtKB"/>
</dbReference>
<dbReference type="GO" id="GO:0030674">
    <property type="term" value="F:protein-macromolecule adaptor activity"/>
    <property type="evidence" value="ECO:0000353"/>
    <property type="project" value="BHF-UCL"/>
</dbReference>
<dbReference type="GO" id="GO:0043021">
    <property type="term" value="F:ribonucleoprotein complex binding"/>
    <property type="evidence" value="ECO:0000250"/>
    <property type="project" value="UniProtKB"/>
</dbReference>
<dbReference type="GO" id="GO:0006974">
    <property type="term" value="P:DNA damage response"/>
    <property type="evidence" value="ECO:0000250"/>
    <property type="project" value="UniProtKB"/>
</dbReference>
<dbReference type="GO" id="GO:0045892">
    <property type="term" value="P:negative regulation of DNA-templated transcription"/>
    <property type="evidence" value="ECO:0000314"/>
    <property type="project" value="MGI"/>
</dbReference>
<dbReference type="GO" id="GO:0000122">
    <property type="term" value="P:negative regulation of transcription by RNA polymerase II"/>
    <property type="evidence" value="ECO:0000250"/>
    <property type="project" value="UniProtKB"/>
</dbReference>
<dbReference type="CDD" id="cd18651">
    <property type="entry name" value="CD_HP1alpha_Cbx5"/>
    <property type="match status" value="1"/>
</dbReference>
<dbReference type="CDD" id="cd18655">
    <property type="entry name" value="CSD_HP1alpha_Cbx5"/>
    <property type="match status" value="1"/>
</dbReference>
<dbReference type="FunFam" id="2.40.50.40:FF:000007">
    <property type="entry name" value="Chromobox protein homolog 1"/>
    <property type="match status" value="1"/>
</dbReference>
<dbReference type="FunFam" id="2.40.50.40:FF:000009">
    <property type="entry name" value="chromobox protein homolog 1"/>
    <property type="match status" value="1"/>
</dbReference>
<dbReference type="Gene3D" id="2.40.50.40">
    <property type="match status" value="2"/>
</dbReference>
<dbReference type="InterPro" id="IPR016197">
    <property type="entry name" value="Chromo-like_dom_sf"/>
</dbReference>
<dbReference type="InterPro" id="IPR000953">
    <property type="entry name" value="Chromo/chromo_shadow_dom"/>
</dbReference>
<dbReference type="InterPro" id="IPR017984">
    <property type="entry name" value="Chromo_dom_subgr"/>
</dbReference>
<dbReference type="InterPro" id="IPR023780">
    <property type="entry name" value="Chromo_domain"/>
</dbReference>
<dbReference type="InterPro" id="IPR008251">
    <property type="entry name" value="Chromo_shadow_dom"/>
</dbReference>
<dbReference type="InterPro" id="IPR023779">
    <property type="entry name" value="Chromodomain_CS"/>
</dbReference>
<dbReference type="InterPro" id="IPR051219">
    <property type="entry name" value="Heterochromatin_chromo-domain"/>
</dbReference>
<dbReference type="PANTHER" id="PTHR22812">
    <property type="entry name" value="CHROMOBOX PROTEIN"/>
    <property type="match status" value="1"/>
</dbReference>
<dbReference type="Pfam" id="PF00385">
    <property type="entry name" value="Chromo"/>
    <property type="match status" value="1"/>
</dbReference>
<dbReference type="Pfam" id="PF01393">
    <property type="entry name" value="Chromo_shadow"/>
    <property type="match status" value="1"/>
</dbReference>
<dbReference type="PRINTS" id="PR00504">
    <property type="entry name" value="CHROMODOMAIN"/>
</dbReference>
<dbReference type="SMART" id="SM00298">
    <property type="entry name" value="CHROMO"/>
    <property type="match status" value="2"/>
</dbReference>
<dbReference type="SMART" id="SM00300">
    <property type="entry name" value="ChSh"/>
    <property type="match status" value="1"/>
</dbReference>
<dbReference type="SUPFAM" id="SSF54160">
    <property type="entry name" value="Chromo domain-like"/>
    <property type="match status" value="2"/>
</dbReference>
<dbReference type="PROSITE" id="PS00598">
    <property type="entry name" value="CHROMO_1"/>
    <property type="match status" value="1"/>
</dbReference>
<dbReference type="PROSITE" id="PS50013">
    <property type="entry name" value="CHROMO_2"/>
    <property type="match status" value="2"/>
</dbReference>